<evidence type="ECO:0000255" key="1">
    <source>
        <dbReference type="HAMAP-Rule" id="MF_01405"/>
    </source>
</evidence>
<organism>
    <name type="scientific">Ralstonia nicotianae (strain ATCC BAA-1114 / GMI1000)</name>
    <name type="common">Ralstonia solanacearum</name>
    <dbReference type="NCBI Taxonomy" id="267608"/>
    <lineage>
        <taxon>Bacteria</taxon>
        <taxon>Pseudomonadati</taxon>
        <taxon>Pseudomonadota</taxon>
        <taxon>Betaproteobacteria</taxon>
        <taxon>Burkholderiales</taxon>
        <taxon>Burkholderiaceae</taxon>
        <taxon>Ralstonia</taxon>
        <taxon>Ralstonia solanacearum species complex</taxon>
    </lineage>
</organism>
<name>IXTPA_RALN1</name>
<comment type="function">
    <text evidence="1">Pyrophosphatase that catalyzes the hydrolysis of nucleoside triphosphates to their monophosphate derivatives, with a high preference for the non-canonical purine nucleotides XTP (xanthosine triphosphate), dITP (deoxyinosine triphosphate) and ITP. Seems to function as a house-cleaning enzyme that removes non-canonical purine nucleotides from the nucleotide pool, thus preventing their incorporation into DNA/RNA and avoiding chromosomal lesions.</text>
</comment>
<comment type="catalytic activity">
    <reaction evidence="1">
        <text>XTP + H2O = XMP + diphosphate + H(+)</text>
        <dbReference type="Rhea" id="RHEA:28610"/>
        <dbReference type="ChEBI" id="CHEBI:15377"/>
        <dbReference type="ChEBI" id="CHEBI:15378"/>
        <dbReference type="ChEBI" id="CHEBI:33019"/>
        <dbReference type="ChEBI" id="CHEBI:57464"/>
        <dbReference type="ChEBI" id="CHEBI:61314"/>
        <dbReference type="EC" id="3.6.1.66"/>
    </reaction>
</comment>
<comment type="catalytic activity">
    <reaction evidence="1">
        <text>dITP + H2O = dIMP + diphosphate + H(+)</text>
        <dbReference type="Rhea" id="RHEA:28342"/>
        <dbReference type="ChEBI" id="CHEBI:15377"/>
        <dbReference type="ChEBI" id="CHEBI:15378"/>
        <dbReference type="ChEBI" id="CHEBI:33019"/>
        <dbReference type="ChEBI" id="CHEBI:61194"/>
        <dbReference type="ChEBI" id="CHEBI:61382"/>
        <dbReference type="EC" id="3.6.1.66"/>
    </reaction>
</comment>
<comment type="catalytic activity">
    <reaction evidence="1">
        <text>ITP + H2O = IMP + diphosphate + H(+)</text>
        <dbReference type="Rhea" id="RHEA:29399"/>
        <dbReference type="ChEBI" id="CHEBI:15377"/>
        <dbReference type="ChEBI" id="CHEBI:15378"/>
        <dbReference type="ChEBI" id="CHEBI:33019"/>
        <dbReference type="ChEBI" id="CHEBI:58053"/>
        <dbReference type="ChEBI" id="CHEBI:61402"/>
        <dbReference type="EC" id="3.6.1.66"/>
    </reaction>
</comment>
<comment type="cofactor">
    <cofactor evidence="1">
        <name>Mg(2+)</name>
        <dbReference type="ChEBI" id="CHEBI:18420"/>
    </cofactor>
    <text evidence="1">Binds 1 Mg(2+) ion per subunit.</text>
</comment>
<comment type="subunit">
    <text evidence="1">Homodimer.</text>
</comment>
<comment type="similarity">
    <text evidence="1">Belongs to the HAM1 NTPase family.</text>
</comment>
<sequence>MRRIVLASNNPGKLAEFNALLAPLGLDVAPQGELGIPEAEEPHATFVENALAKARHASRLAGLPALADDSGICAHALGGAPGVYSARYAQLAGGPKSDAANNARLVRELAGHADRGAHYVCVLVYVRHADDPQPIIAEGSWFGEVIDAPRGDGGFGYDPHFLLPALGKTAAELSKAEKNAVSHRAQALAQLVERLRLFENA</sequence>
<dbReference type="EC" id="3.6.1.66" evidence="1"/>
<dbReference type="EMBL" id="AL646052">
    <property type="protein sequence ID" value="CAD15867.1"/>
    <property type="molecule type" value="Genomic_DNA"/>
</dbReference>
<dbReference type="SMR" id="Q8XXF4"/>
<dbReference type="STRING" id="267608.RSc2160"/>
<dbReference type="EnsemblBacteria" id="CAD15867">
    <property type="protein sequence ID" value="CAD15867"/>
    <property type="gene ID" value="RSc2160"/>
</dbReference>
<dbReference type="KEGG" id="rso:RSc2160"/>
<dbReference type="PATRIC" id="fig|267608.8.peg.2195"/>
<dbReference type="eggNOG" id="COG0127">
    <property type="taxonomic scope" value="Bacteria"/>
</dbReference>
<dbReference type="HOGENOM" id="CLU_082080_0_3_4"/>
<dbReference type="Proteomes" id="UP000001436">
    <property type="component" value="Chromosome"/>
</dbReference>
<dbReference type="GO" id="GO:0005829">
    <property type="term" value="C:cytosol"/>
    <property type="evidence" value="ECO:0007669"/>
    <property type="project" value="TreeGrafter"/>
</dbReference>
<dbReference type="GO" id="GO:0035870">
    <property type="term" value="F:dITP diphosphatase activity"/>
    <property type="evidence" value="ECO:0007669"/>
    <property type="project" value="RHEA"/>
</dbReference>
<dbReference type="GO" id="GO:0036220">
    <property type="term" value="F:ITP diphosphatase activity"/>
    <property type="evidence" value="ECO:0007669"/>
    <property type="project" value="UniProtKB-EC"/>
</dbReference>
<dbReference type="GO" id="GO:0046872">
    <property type="term" value="F:metal ion binding"/>
    <property type="evidence" value="ECO:0007669"/>
    <property type="project" value="UniProtKB-KW"/>
</dbReference>
<dbReference type="GO" id="GO:0000166">
    <property type="term" value="F:nucleotide binding"/>
    <property type="evidence" value="ECO:0007669"/>
    <property type="project" value="UniProtKB-KW"/>
</dbReference>
<dbReference type="GO" id="GO:0017111">
    <property type="term" value="F:ribonucleoside triphosphate phosphatase activity"/>
    <property type="evidence" value="ECO:0007669"/>
    <property type="project" value="InterPro"/>
</dbReference>
<dbReference type="GO" id="GO:0036222">
    <property type="term" value="F:XTP diphosphatase activity"/>
    <property type="evidence" value="ECO:0007669"/>
    <property type="project" value="RHEA"/>
</dbReference>
<dbReference type="GO" id="GO:0009117">
    <property type="term" value="P:nucleotide metabolic process"/>
    <property type="evidence" value="ECO:0007669"/>
    <property type="project" value="UniProtKB-KW"/>
</dbReference>
<dbReference type="GO" id="GO:0009146">
    <property type="term" value="P:purine nucleoside triphosphate catabolic process"/>
    <property type="evidence" value="ECO:0007669"/>
    <property type="project" value="UniProtKB-UniRule"/>
</dbReference>
<dbReference type="CDD" id="cd00515">
    <property type="entry name" value="HAM1"/>
    <property type="match status" value="1"/>
</dbReference>
<dbReference type="FunFam" id="3.90.950.10:FF:000001">
    <property type="entry name" value="dITP/XTP pyrophosphatase"/>
    <property type="match status" value="1"/>
</dbReference>
<dbReference type="Gene3D" id="3.90.950.10">
    <property type="match status" value="1"/>
</dbReference>
<dbReference type="HAMAP" id="MF_01405">
    <property type="entry name" value="Non_canon_purine_NTPase"/>
    <property type="match status" value="1"/>
</dbReference>
<dbReference type="InterPro" id="IPR020922">
    <property type="entry name" value="dITP/XTP_pyrophosphatase"/>
</dbReference>
<dbReference type="InterPro" id="IPR029001">
    <property type="entry name" value="ITPase-like_fam"/>
</dbReference>
<dbReference type="InterPro" id="IPR002637">
    <property type="entry name" value="RdgB/HAM1"/>
</dbReference>
<dbReference type="NCBIfam" id="TIGR00042">
    <property type="entry name" value="RdgB/HAM1 family non-canonical purine NTP pyrophosphatase"/>
    <property type="match status" value="1"/>
</dbReference>
<dbReference type="PANTHER" id="PTHR11067:SF9">
    <property type="entry name" value="INOSINE TRIPHOSPHATE PYROPHOSPHATASE"/>
    <property type="match status" value="1"/>
</dbReference>
<dbReference type="PANTHER" id="PTHR11067">
    <property type="entry name" value="INOSINE TRIPHOSPHATE PYROPHOSPHATASE/HAM1 PROTEIN"/>
    <property type="match status" value="1"/>
</dbReference>
<dbReference type="Pfam" id="PF01725">
    <property type="entry name" value="Ham1p_like"/>
    <property type="match status" value="1"/>
</dbReference>
<dbReference type="SUPFAM" id="SSF52972">
    <property type="entry name" value="ITPase-like"/>
    <property type="match status" value="1"/>
</dbReference>
<accession>Q8XXF4</accession>
<gene>
    <name type="ordered locus">RSc2160</name>
    <name type="ORF">RS01442</name>
</gene>
<feature type="chain" id="PRO_0000178216" description="dITP/XTP pyrophosphatase">
    <location>
        <begin position="1"/>
        <end position="201"/>
    </location>
</feature>
<feature type="active site" description="Proton acceptor" evidence="1">
    <location>
        <position position="69"/>
    </location>
</feature>
<feature type="binding site" evidence="1">
    <location>
        <begin position="8"/>
        <end position="13"/>
    </location>
    <ligand>
        <name>substrate</name>
    </ligand>
</feature>
<feature type="binding site" evidence="1">
    <location>
        <position position="40"/>
    </location>
    <ligand>
        <name>Mg(2+)</name>
        <dbReference type="ChEBI" id="CHEBI:18420"/>
    </ligand>
</feature>
<feature type="binding site" evidence="1">
    <location>
        <position position="69"/>
    </location>
    <ligand>
        <name>Mg(2+)</name>
        <dbReference type="ChEBI" id="CHEBI:18420"/>
    </ligand>
</feature>
<feature type="binding site" evidence="1">
    <location>
        <position position="70"/>
    </location>
    <ligand>
        <name>substrate</name>
    </ligand>
</feature>
<feature type="binding site" evidence="1">
    <location>
        <begin position="155"/>
        <end position="158"/>
    </location>
    <ligand>
        <name>substrate</name>
    </ligand>
</feature>
<feature type="binding site" evidence="1">
    <location>
        <position position="178"/>
    </location>
    <ligand>
        <name>substrate</name>
    </ligand>
</feature>
<feature type="binding site" evidence="1">
    <location>
        <begin position="183"/>
        <end position="184"/>
    </location>
    <ligand>
        <name>substrate</name>
    </ligand>
</feature>
<reference key="1">
    <citation type="journal article" date="2002" name="Nature">
        <title>Genome sequence of the plant pathogen Ralstonia solanacearum.</title>
        <authorList>
            <person name="Salanoubat M."/>
            <person name="Genin S."/>
            <person name="Artiguenave F."/>
            <person name="Gouzy J."/>
            <person name="Mangenot S."/>
            <person name="Arlat M."/>
            <person name="Billault A."/>
            <person name="Brottier P."/>
            <person name="Camus J.-C."/>
            <person name="Cattolico L."/>
            <person name="Chandler M."/>
            <person name="Choisne N."/>
            <person name="Claudel-Renard C."/>
            <person name="Cunnac S."/>
            <person name="Demange N."/>
            <person name="Gaspin C."/>
            <person name="Lavie M."/>
            <person name="Moisan A."/>
            <person name="Robert C."/>
            <person name="Saurin W."/>
            <person name="Schiex T."/>
            <person name="Siguier P."/>
            <person name="Thebault P."/>
            <person name="Whalen M."/>
            <person name="Wincker P."/>
            <person name="Levy M."/>
            <person name="Weissenbach J."/>
            <person name="Boucher C.A."/>
        </authorList>
    </citation>
    <scope>NUCLEOTIDE SEQUENCE [LARGE SCALE GENOMIC DNA]</scope>
    <source>
        <strain>ATCC BAA-1114 / GMI1000</strain>
    </source>
</reference>
<proteinExistence type="inferred from homology"/>
<keyword id="KW-0378">Hydrolase</keyword>
<keyword id="KW-0460">Magnesium</keyword>
<keyword id="KW-0479">Metal-binding</keyword>
<keyword id="KW-0546">Nucleotide metabolism</keyword>
<keyword id="KW-0547">Nucleotide-binding</keyword>
<keyword id="KW-1185">Reference proteome</keyword>
<protein>
    <recommendedName>
        <fullName evidence="1">dITP/XTP pyrophosphatase</fullName>
        <ecNumber evidence="1">3.6.1.66</ecNumber>
    </recommendedName>
    <alternativeName>
        <fullName evidence="1">Non-canonical purine NTP pyrophosphatase</fullName>
    </alternativeName>
    <alternativeName>
        <fullName evidence="1">Non-standard purine NTP pyrophosphatase</fullName>
    </alternativeName>
    <alternativeName>
        <fullName evidence="1">Nucleoside-triphosphate diphosphatase</fullName>
    </alternativeName>
    <alternativeName>
        <fullName evidence="1">Nucleoside-triphosphate pyrophosphatase</fullName>
        <shortName evidence="1">NTPase</shortName>
    </alternativeName>
</protein>